<sequence>MLLTSTNTLKISSQRKEWEAKDLTGMFHGQVNGRVKIPASDREGPMSSSIKEMLNNVELSVSSYDTAWAAMVPALDSSKQPLFPKYLSWVMENQKSDGSWGLDLNHPLLIKDSLSSTLACVLTLQRWNVGQQLVHKGLDFIGSNIWAATDESQHSPTGFNMIFPSMIECGTNMGLNLPLNPSSIEAMLIKRDLETESACSLKGTSNLAYVAEGLTRLDDWKDVMKYQRSNGSFFNSPSSTAAAFIHLRDEKCFDYLNSLSKRFENAVPTIYPFDIFTRVSILDILEKLGIDRYISKDKERTLDDLHRCWMKGSDEIFLDPTCSAMAFRLLRTNGYAISSDALSKFEEQKHLYNPKDIKCVLELFKASQMAIFQNEPTLDRIYAWTSTYLKEKLLKGVISDKSLREEVDFVLKHPHARLERIENRKFIESYNVDNVSLTKTSYRFCNVDERYLLTFACQDFNICQSMHQKELDDLERWVIERRLSDLKYARQKVKYAYFAIACRLFQPDFLDARISWVQNSVILTVVDDFFEVGGSLEALSNLIELVERWDEHLTVGYKSEEVKILFHAIYDTINDLADKAYRKQGRCVKRHLVDTWLIYLKSVLKEAEWVTNKTVTTMDEYISNGYISAGSGPIIFSSLYFLEVLSEEIVNSEEYKNLYMHTSMICRLLNDRVQAKSDGAQGKQNSVSLQVIHGNGIITEEEAVKEVTRMIEYHRRELLRMVVETEGSIVPKACKDVFWLMSRILHLFYMSDDGYSSPTKMIHAADAIINEPIIVSQK</sequence>
<comment type="function">
    <text evidence="3">Diterpene cyclase involved in the biosynthesis of labdane-related diterpenoids (LRDs) natural products (PubMed:24810014). Catalyzes the cyclization of ent-CDP into ent-sandaracopimaradiene as a major, and ent-pimaradiene and ent-labdatriene as minor products (PubMed:24810014).</text>
</comment>
<comment type="catalytic activity">
    <reaction evidence="3">
        <text>ent-copalyl diphosphate = ent-sandaracopimara-8(14),15-diene + diphosphate</text>
        <dbReference type="Rhea" id="RHEA:25536"/>
        <dbReference type="ChEBI" id="CHEBI:33019"/>
        <dbReference type="ChEBI" id="CHEBI:50061"/>
        <dbReference type="ChEBI" id="CHEBI:58553"/>
        <dbReference type="EC" id="4.2.3.29"/>
    </reaction>
    <physiologicalReaction direction="left-to-right" evidence="3">
        <dbReference type="Rhea" id="RHEA:25537"/>
    </physiologicalReaction>
</comment>
<comment type="catalytic activity">
    <reaction evidence="3">
        <text>ent-copalyl diphosphate = ent-(12E)-labda-8(17),12,14-triene + diphosphate</text>
        <dbReference type="Rhea" id="RHEA:81223"/>
        <dbReference type="ChEBI" id="CHEBI:33019"/>
        <dbReference type="ChEBI" id="CHEBI:58553"/>
        <dbReference type="ChEBI" id="CHEBI:231828"/>
    </reaction>
    <physiologicalReaction direction="left-to-right" evidence="3">
        <dbReference type="Rhea" id="RHEA:81224"/>
    </physiologicalReaction>
</comment>
<comment type="cofactor">
    <cofactor evidence="1">
        <name>Mg(2+)</name>
        <dbReference type="ChEBI" id="CHEBI:18420"/>
    </cofactor>
    <text evidence="1">Binds 3 Mg(2+) ions per subunit.</text>
</comment>
<comment type="pathway">
    <text evidence="3">Secondary metabolite biosynthesis; terpenoid biosynthesis.</text>
</comment>
<comment type="subcellular location">
    <subcellularLocation>
        <location evidence="2">Plastid</location>
        <location evidence="2">Chloroplast</location>
    </subcellularLocation>
</comment>
<comment type="domain">
    <text evidence="1">The Asp-Asp-Xaa-Xaa-Asp/Glu (DDXXD/E) motif is important for the catalytic activity, presumably through binding to Mg(2+).</text>
</comment>
<comment type="similarity">
    <text evidence="5">Belongs to the terpene synthase family.</text>
</comment>
<comment type="sequence caution" evidence="5">
    <conflict type="erroneous initiation">
        <sequence resource="EMBL-CDS" id="EEF36530"/>
    </conflict>
    <text>Extended N-terminus.</text>
</comment>
<organism>
    <name type="scientific">Ricinus communis</name>
    <name type="common">Castor bean</name>
    <dbReference type="NCBI Taxonomy" id="3988"/>
    <lineage>
        <taxon>Eukaryota</taxon>
        <taxon>Viridiplantae</taxon>
        <taxon>Streptophyta</taxon>
        <taxon>Embryophyta</taxon>
        <taxon>Tracheophyta</taxon>
        <taxon>Spermatophyta</taxon>
        <taxon>Magnoliopsida</taxon>
        <taxon>eudicotyledons</taxon>
        <taxon>Gunneridae</taxon>
        <taxon>Pentapetalae</taxon>
        <taxon>rosids</taxon>
        <taxon>fabids</taxon>
        <taxon>Malpighiales</taxon>
        <taxon>Euphorbiaceae</taxon>
        <taxon>Acalyphoideae</taxon>
        <taxon>Acalypheae</taxon>
        <taxon>Ricinus</taxon>
    </lineage>
</organism>
<protein>
    <recommendedName>
        <fullName evidence="4">Ent-sandaracopimaradiene synthase KSL3, chloroplastic</fullName>
        <ecNumber evidence="3">4.2.3.29</ecNumber>
    </recommendedName>
    <alternativeName>
        <fullName evidence="4">Ent-kaurene synthase-like 3</fullName>
        <shortName evidence="4">RcKSL3</shortName>
    </alternativeName>
    <alternativeName>
        <fullName evidence="4">Ent-labdatriene synthase KSL3</fullName>
        <ecNumber evidence="3">4.2.3.-</ecNumber>
    </alternativeName>
    <alternativeName>
        <fullName evidence="4">Ent-pimaradiene synthase KSL3</fullName>
        <ecNumber evidence="3">4.2.3.-</ecNumber>
    </alternativeName>
</protein>
<evidence type="ECO:0000250" key="1">
    <source>
        <dbReference type="UniProtKB" id="Q40577"/>
    </source>
</evidence>
<evidence type="ECO:0000255" key="2"/>
<evidence type="ECO:0000269" key="3">
    <source>
    </source>
</evidence>
<evidence type="ECO:0000303" key="4">
    <source>
    </source>
</evidence>
<evidence type="ECO:0000305" key="5"/>
<evidence type="ECO:0000312" key="6">
    <source>
        <dbReference type="EMBL" id="EEF36530.1"/>
    </source>
</evidence>
<dbReference type="EC" id="4.2.3.29" evidence="3"/>
<dbReference type="EC" id="4.2.3.-" evidence="3"/>
<dbReference type="EMBL" id="EQ973975">
    <property type="protein sequence ID" value="EEF36530.1"/>
    <property type="status" value="ALT_INIT"/>
    <property type="molecule type" value="Genomic_DNA"/>
</dbReference>
<dbReference type="SMR" id="B9SIL7"/>
<dbReference type="STRING" id="3988.B9SIL7"/>
<dbReference type="eggNOG" id="ENOG502QVGX">
    <property type="taxonomic scope" value="Eukaryota"/>
</dbReference>
<dbReference type="InParanoid" id="B9SIL7"/>
<dbReference type="BRENDA" id="4.2.3.19">
    <property type="organism ID" value="1204"/>
</dbReference>
<dbReference type="UniPathway" id="UPA00213"/>
<dbReference type="Proteomes" id="UP000008311">
    <property type="component" value="Unassembled WGS sequence"/>
</dbReference>
<dbReference type="GO" id="GO:0009507">
    <property type="term" value="C:chloroplast"/>
    <property type="evidence" value="ECO:0000318"/>
    <property type="project" value="GO_Central"/>
</dbReference>
<dbReference type="GO" id="GO:0009899">
    <property type="term" value="F:ent-kaurene synthase activity"/>
    <property type="evidence" value="ECO:0007669"/>
    <property type="project" value="UniProtKB-EC"/>
</dbReference>
<dbReference type="GO" id="GO:0034280">
    <property type="term" value="F:ent-sandaracopimaradiene synthase activity"/>
    <property type="evidence" value="ECO:0007669"/>
    <property type="project" value="RHEA"/>
</dbReference>
<dbReference type="GO" id="GO:0000287">
    <property type="term" value="F:magnesium ion binding"/>
    <property type="evidence" value="ECO:0000318"/>
    <property type="project" value="GO_Central"/>
</dbReference>
<dbReference type="GO" id="GO:0010333">
    <property type="term" value="F:terpene synthase activity"/>
    <property type="evidence" value="ECO:0000318"/>
    <property type="project" value="GO_Central"/>
</dbReference>
<dbReference type="GO" id="GO:0009686">
    <property type="term" value="P:gibberellin biosynthetic process"/>
    <property type="evidence" value="ECO:0000318"/>
    <property type="project" value="GO_Central"/>
</dbReference>
<dbReference type="FunFam" id="1.50.10.130:FF:000002">
    <property type="entry name" value="Ent-copalyl diphosphate synthase, chloroplastic"/>
    <property type="match status" value="1"/>
</dbReference>
<dbReference type="FunFam" id="1.10.600.10:FF:000005">
    <property type="entry name" value="Ent-kaur-16-ene synthase, chloroplastic"/>
    <property type="match status" value="1"/>
</dbReference>
<dbReference type="Gene3D" id="1.50.10.160">
    <property type="match status" value="1"/>
</dbReference>
<dbReference type="Gene3D" id="1.10.600.10">
    <property type="entry name" value="Farnesyl Diphosphate Synthase"/>
    <property type="match status" value="1"/>
</dbReference>
<dbReference type="Gene3D" id="1.50.10.130">
    <property type="entry name" value="Terpene synthase, N-terminal domain"/>
    <property type="match status" value="1"/>
</dbReference>
<dbReference type="InterPro" id="IPR008949">
    <property type="entry name" value="Isoprenoid_synthase_dom_sf"/>
</dbReference>
<dbReference type="InterPro" id="IPR001906">
    <property type="entry name" value="Terpene_synth_N"/>
</dbReference>
<dbReference type="InterPro" id="IPR036965">
    <property type="entry name" value="Terpene_synth_N_sf"/>
</dbReference>
<dbReference type="InterPro" id="IPR050148">
    <property type="entry name" value="Terpene_synthase-like"/>
</dbReference>
<dbReference type="InterPro" id="IPR005630">
    <property type="entry name" value="Terpene_synthase_metal-bd"/>
</dbReference>
<dbReference type="InterPro" id="IPR008930">
    <property type="entry name" value="Terpenoid_cyclase/PrenylTrfase"/>
</dbReference>
<dbReference type="PANTHER" id="PTHR31739">
    <property type="entry name" value="ENT-COPALYL DIPHOSPHATE SYNTHASE, CHLOROPLASTIC"/>
    <property type="match status" value="1"/>
</dbReference>
<dbReference type="PANTHER" id="PTHR31739:SF34">
    <property type="entry name" value="TERPENE SYNTHASE METAL-BINDING DOMAIN-CONTAINING PROTEIN"/>
    <property type="match status" value="1"/>
</dbReference>
<dbReference type="Pfam" id="PF01397">
    <property type="entry name" value="Terpene_synth"/>
    <property type="match status" value="1"/>
</dbReference>
<dbReference type="Pfam" id="PF03936">
    <property type="entry name" value="Terpene_synth_C"/>
    <property type="match status" value="1"/>
</dbReference>
<dbReference type="SFLD" id="SFLDG01014">
    <property type="entry name" value="Terpene_Cyclase_Like_1_N-term"/>
    <property type="match status" value="1"/>
</dbReference>
<dbReference type="SUPFAM" id="SSF48239">
    <property type="entry name" value="Terpenoid cyclases/Protein prenyltransferases"/>
    <property type="match status" value="2"/>
</dbReference>
<dbReference type="SUPFAM" id="SSF48576">
    <property type="entry name" value="Terpenoid synthases"/>
    <property type="match status" value="1"/>
</dbReference>
<name>KSL3_RICCO</name>
<proteinExistence type="evidence at protein level"/>
<gene>
    <name evidence="4" type="primary">KSL3</name>
    <name evidence="6" type="ORF">RCOM_0823080</name>
</gene>
<feature type="transit peptide" description="Chloroplast" evidence="2">
    <location>
        <begin position="1"/>
        <end position="35"/>
    </location>
</feature>
<feature type="chain" id="PRO_0000460912" description="Ent-sandaracopimaradiene synthase KSL3, chloroplastic">
    <location>
        <begin position="36"/>
        <end position="778"/>
    </location>
</feature>
<feature type="short sequence motif" description="DDXXD motif" evidence="1">
    <location>
        <begin position="527"/>
        <end position="531"/>
    </location>
</feature>
<feature type="binding site" evidence="1">
    <location>
        <position position="527"/>
    </location>
    <ligand>
        <name>Mg(2+)</name>
        <dbReference type="ChEBI" id="CHEBI:18420"/>
        <label>1</label>
    </ligand>
</feature>
<feature type="binding site" evidence="1">
    <location>
        <position position="527"/>
    </location>
    <ligand>
        <name>Mg(2+)</name>
        <dbReference type="ChEBI" id="CHEBI:18420"/>
        <label>2</label>
    </ligand>
</feature>
<feature type="binding site" evidence="1">
    <location>
        <position position="531"/>
    </location>
    <ligand>
        <name>Mg(2+)</name>
        <dbReference type="ChEBI" id="CHEBI:18420"/>
        <label>1</label>
    </ligand>
</feature>
<feature type="binding site" evidence="1">
    <location>
        <position position="531"/>
    </location>
    <ligand>
        <name>Mg(2+)</name>
        <dbReference type="ChEBI" id="CHEBI:18420"/>
        <label>2</label>
    </ligand>
</feature>
<feature type="binding site" evidence="1">
    <location>
        <position position="670"/>
    </location>
    <ligand>
        <name>Mg(2+)</name>
        <dbReference type="ChEBI" id="CHEBI:18420"/>
        <label>3</label>
    </ligand>
</feature>
<feature type="binding site" evidence="1">
    <location>
        <position position="671"/>
    </location>
    <ligand>
        <name>Mg(2+)</name>
        <dbReference type="ChEBI" id="CHEBI:18420"/>
        <label>3</label>
    </ligand>
</feature>
<feature type="binding site" evidence="1">
    <location>
        <position position="678"/>
    </location>
    <ligand>
        <name>Mg(2+)</name>
        <dbReference type="ChEBI" id="CHEBI:18420"/>
        <label>3</label>
    </ligand>
</feature>
<feature type="mutagenesis site" description="Slightly decreased catalytic activity." evidence="3">
    <original>Q</original>
    <variation>T</variation>
    <location>
        <position position="674"/>
    </location>
</feature>
<reference key="1">
    <citation type="journal article" date="2010" name="Nat. Biotechnol.">
        <title>Draft genome sequence of the oilseed species Ricinus communis.</title>
        <authorList>
            <person name="Chan A.P."/>
            <person name="Crabtree J."/>
            <person name="Zhao Q."/>
            <person name="Lorenzi H."/>
            <person name="Orvis J."/>
            <person name="Puiu D."/>
            <person name="Melake-Berhan A."/>
            <person name="Jones K.M."/>
            <person name="Redman J."/>
            <person name="Chen G."/>
            <person name="Cahoon E.B."/>
            <person name="Gedil M."/>
            <person name="Stanke M."/>
            <person name="Haas B.J."/>
            <person name="Wortman J.R."/>
            <person name="Fraser-Liggett C.M."/>
            <person name="Ravel J."/>
            <person name="Rabinowicz P.D."/>
        </authorList>
    </citation>
    <scope>NUCLEOTIDE SEQUENCE [LARGE SCALE GENOMIC DNA]</scope>
    <source>
        <strain>cv. Hale</strain>
    </source>
</reference>
<reference key="2">
    <citation type="journal article" date="2014" name="Phytochemistry">
        <title>Biochemical characterization of the castor bean ent-kaurene synthase(-like) family supports quantum chemical view of diterpene cyclization.</title>
        <authorList>
            <person name="Jackson A.J."/>
            <person name="Hershey D.M."/>
            <person name="Chesnut T."/>
            <person name="Xu M."/>
            <person name="Peters R.J."/>
        </authorList>
    </citation>
    <scope>FUNCTION</scope>
    <scope>MUTAGENESIS OF GLN-674</scope>
    <scope>CATALYTIC ACTIVITY</scope>
    <scope>PATHWAY</scope>
    <scope>GENE FAMILY</scope>
    <scope>NOMENCLATURE</scope>
</reference>
<accession>B9SIL7</accession>
<keyword id="KW-0150">Chloroplast</keyword>
<keyword id="KW-0456">Lyase</keyword>
<keyword id="KW-0460">Magnesium</keyword>
<keyword id="KW-0479">Metal-binding</keyword>
<keyword id="KW-0934">Plastid</keyword>
<keyword id="KW-1185">Reference proteome</keyword>
<keyword id="KW-0809">Transit peptide</keyword>